<feature type="chain" id="PRO_0000148476" description="Dihydroorotate dehydrogenase (quinone)">
    <location>
        <begin position="1"/>
        <end position="368"/>
    </location>
</feature>
<feature type="active site" description="Nucleophile" evidence="1">
    <location>
        <position position="182"/>
    </location>
</feature>
<feature type="binding site" evidence="1">
    <location>
        <begin position="67"/>
        <end position="71"/>
    </location>
    <ligand>
        <name>FMN</name>
        <dbReference type="ChEBI" id="CHEBI:58210"/>
    </ligand>
</feature>
<feature type="binding site" evidence="1">
    <location>
        <position position="71"/>
    </location>
    <ligand>
        <name>substrate</name>
    </ligand>
</feature>
<feature type="binding site" evidence="1">
    <location>
        <position position="91"/>
    </location>
    <ligand>
        <name>FMN</name>
        <dbReference type="ChEBI" id="CHEBI:58210"/>
    </ligand>
</feature>
<feature type="binding site" evidence="1">
    <location>
        <begin position="116"/>
        <end position="120"/>
    </location>
    <ligand>
        <name>substrate</name>
    </ligand>
</feature>
<feature type="binding site" evidence="1">
    <location>
        <position position="146"/>
    </location>
    <ligand>
        <name>FMN</name>
        <dbReference type="ChEBI" id="CHEBI:58210"/>
    </ligand>
</feature>
<feature type="binding site" evidence="1">
    <location>
        <position position="179"/>
    </location>
    <ligand>
        <name>FMN</name>
        <dbReference type="ChEBI" id="CHEBI:58210"/>
    </ligand>
</feature>
<feature type="binding site" evidence="1">
    <location>
        <position position="179"/>
    </location>
    <ligand>
        <name>substrate</name>
    </ligand>
</feature>
<feature type="binding site" evidence="1">
    <location>
        <position position="184"/>
    </location>
    <ligand>
        <name>substrate</name>
    </ligand>
</feature>
<feature type="binding site" evidence="1">
    <location>
        <position position="222"/>
    </location>
    <ligand>
        <name>FMN</name>
        <dbReference type="ChEBI" id="CHEBI:58210"/>
    </ligand>
</feature>
<feature type="binding site" evidence="1">
    <location>
        <position position="250"/>
    </location>
    <ligand>
        <name>FMN</name>
        <dbReference type="ChEBI" id="CHEBI:58210"/>
    </ligand>
</feature>
<feature type="binding site" evidence="1">
    <location>
        <begin position="251"/>
        <end position="252"/>
    </location>
    <ligand>
        <name>substrate</name>
    </ligand>
</feature>
<feature type="binding site" evidence="1">
    <location>
        <position position="276"/>
    </location>
    <ligand>
        <name>FMN</name>
        <dbReference type="ChEBI" id="CHEBI:58210"/>
    </ligand>
</feature>
<feature type="binding site" evidence="1">
    <location>
        <position position="305"/>
    </location>
    <ligand>
        <name>FMN</name>
        <dbReference type="ChEBI" id="CHEBI:58210"/>
    </ligand>
</feature>
<feature type="binding site" evidence="1">
    <location>
        <begin position="326"/>
        <end position="327"/>
    </location>
    <ligand>
        <name>FMN</name>
        <dbReference type="ChEBI" id="CHEBI:58210"/>
    </ligand>
</feature>
<protein>
    <recommendedName>
        <fullName evidence="1">Dihydroorotate dehydrogenase (quinone)</fullName>
        <ecNumber evidence="1">1.3.5.2</ecNumber>
    </recommendedName>
    <alternativeName>
        <fullName evidence="1">DHOdehase</fullName>
        <shortName evidence="1">DHOD</shortName>
        <shortName evidence="1">DHODase</shortName>
    </alternativeName>
    <alternativeName>
        <fullName evidence="1">Dihydroorotate oxidase</fullName>
    </alternativeName>
</protein>
<gene>
    <name evidence="1" type="primary">pyrD</name>
    <name type="ordered locus">SAV_6868</name>
</gene>
<name>PYRD_STRAW</name>
<comment type="function">
    <text evidence="1">Catalyzes the conversion of dihydroorotate to orotate with quinone as electron acceptor.</text>
</comment>
<comment type="catalytic activity">
    <reaction evidence="1">
        <text>(S)-dihydroorotate + a quinone = orotate + a quinol</text>
        <dbReference type="Rhea" id="RHEA:30187"/>
        <dbReference type="ChEBI" id="CHEBI:24646"/>
        <dbReference type="ChEBI" id="CHEBI:30839"/>
        <dbReference type="ChEBI" id="CHEBI:30864"/>
        <dbReference type="ChEBI" id="CHEBI:132124"/>
        <dbReference type="EC" id="1.3.5.2"/>
    </reaction>
</comment>
<comment type="cofactor">
    <cofactor evidence="1">
        <name>FMN</name>
        <dbReference type="ChEBI" id="CHEBI:58210"/>
    </cofactor>
    <text evidence="1">Binds 1 FMN per subunit.</text>
</comment>
<comment type="pathway">
    <text evidence="1">Pyrimidine metabolism; UMP biosynthesis via de novo pathway; orotate from (S)-dihydroorotate (quinone route): step 1/1.</text>
</comment>
<comment type="subunit">
    <text evidence="1">Monomer.</text>
</comment>
<comment type="subcellular location">
    <subcellularLocation>
        <location evidence="1">Cell membrane</location>
        <topology evidence="1">Peripheral membrane protein</topology>
    </subcellularLocation>
</comment>
<comment type="similarity">
    <text evidence="1">Belongs to the dihydroorotate dehydrogenase family. Type 2 subfamily.</text>
</comment>
<dbReference type="EC" id="1.3.5.2" evidence="1"/>
<dbReference type="EMBL" id="BA000030">
    <property type="protein sequence ID" value="BAC74579.1"/>
    <property type="molecule type" value="Genomic_DNA"/>
</dbReference>
<dbReference type="RefSeq" id="WP_010988266.1">
    <property type="nucleotide sequence ID" value="NZ_JZJK01000082.1"/>
</dbReference>
<dbReference type="SMR" id="Q827Q6"/>
<dbReference type="GeneID" id="41543943"/>
<dbReference type="KEGG" id="sma:SAVERM_6868"/>
<dbReference type="eggNOG" id="COG0167">
    <property type="taxonomic scope" value="Bacteria"/>
</dbReference>
<dbReference type="HOGENOM" id="CLU_013640_2_0_11"/>
<dbReference type="OrthoDB" id="9802377at2"/>
<dbReference type="UniPathway" id="UPA00070">
    <property type="reaction ID" value="UER00946"/>
</dbReference>
<dbReference type="Proteomes" id="UP000000428">
    <property type="component" value="Chromosome"/>
</dbReference>
<dbReference type="GO" id="GO:0005737">
    <property type="term" value="C:cytoplasm"/>
    <property type="evidence" value="ECO:0007669"/>
    <property type="project" value="InterPro"/>
</dbReference>
<dbReference type="GO" id="GO:0005886">
    <property type="term" value="C:plasma membrane"/>
    <property type="evidence" value="ECO:0007669"/>
    <property type="project" value="UniProtKB-SubCell"/>
</dbReference>
<dbReference type="GO" id="GO:0106430">
    <property type="term" value="F:dihydroorotate dehydrogenase (quinone) activity"/>
    <property type="evidence" value="ECO:0007669"/>
    <property type="project" value="UniProtKB-EC"/>
</dbReference>
<dbReference type="GO" id="GO:0006207">
    <property type="term" value="P:'de novo' pyrimidine nucleobase biosynthetic process"/>
    <property type="evidence" value="ECO:0007669"/>
    <property type="project" value="InterPro"/>
</dbReference>
<dbReference type="GO" id="GO:0044205">
    <property type="term" value="P:'de novo' UMP biosynthetic process"/>
    <property type="evidence" value="ECO:0007669"/>
    <property type="project" value="UniProtKB-UniRule"/>
</dbReference>
<dbReference type="CDD" id="cd04738">
    <property type="entry name" value="DHOD_2_like"/>
    <property type="match status" value="1"/>
</dbReference>
<dbReference type="FunFam" id="3.20.20.70:FF:000123">
    <property type="entry name" value="Dihydroorotate dehydrogenase (quinone)"/>
    <property type="match status" value="1"/>
</dbReference>
<dbReference type="Gene3D" id="3.20.20.70">
    <property type="entry name" value="Aldolase class I"/>
    <property type="match status" value="1"/>
</dbReference>
<dbReference type="HAMAP" id="MF_00225">
    <property type="entry name" value="DHO_dh_type2"/>
    <property type="match status" value="1"/>
</dbReference>
<dbReference type="InterPro" id="IPR013785">
    <property type="entry name" value="Aldolase_TIM"/>
</dbReference>
<dbReference type="InterPro" id="IPR050074">
    <property type="entry name" value="DHO_dehydrogenase"/>
</dbReference>
<dbReference type="InterPro" id="IPR005719">
    <property type="entry name" value="Dihydroorotate_DH_2"/>
</dbReference>
<dbReference type="InterPro" id="IPR005720">
    <property type="entry name" value="Dihydroorotate_DH_cat"/>
</dbReference>
<dbReference type="InterPro" id="IPR001295">
    <property type="entry name" value="Dihydroorotate_DH_CS"/>
</dbReference>
<dbReference type="NCBIfam" id="NF003645">
    <property type="entry name" value="PRK05286.1-2"/>
    <property type="match status" value="1"/>
</dbReference>
<dbReference type="NCBIfam" id="NF003648">
    <property type="entry name" value="PRK05286.2-1"/>
    <property type="match status" value="1"/>
</dbReference>
<dbReference type="NCBIfam" id="NF003652">
    <property type="entry name" value="PRK05286.2-5"/>
    <property type="match status" value="1"/>
</dbReference>
<dbReference type="NCBIfam" id="TIGR01036">
    <property type="entry name" value="pyrD_sub2"/>
    <property type="match status" value="1"/>
</dbReference>
<dbReference type="PANTHER" id="PTHR48109:SF4">
    <property type="entry name" value="DIHYDROOROTATE DEHYDROGENASE (QUINONE), MITOCHONDRIAL"/>
    <property type="match status" value="1"/>
</dbReference>
<dbReference type="PANTHER" id="PTHR48109">
    <property type="entry name" value="DIHYDROOROTATE DEHYDROGENASE (QUINONE), MITOCHONDRIAL-RELATED"/>
    <property type="match status" value="1"/>
</dbReference>
<dbReference type="Pfam" id="PF01180">
    <property type="entry name" value="DHO_dh"/>
    <property type="match status" value="1"/>
</dbReference>
<dbReference type="SUPFAM" id="SSF51395">
    <property type="entry name" value="FMN-linked oxidoreductases"/>
    <property type="match status" value="1"/>
</dbReference>
<dbReference type="PROSITE" id="PS00912">
    <property type="entry name" value="DHODEHASE_2"/>
    <property type="match status" value="1"/>
</dbReference>
<sequence length="368" mass="39880">MYKLFFRLVFKRMDPEQAHYLAFRWIRLAARIPVLRTFVAAALAPRFKELRTEAFGLRMHGPFGLAAGFDKNAVAVDGMSMLGFDHVEIGTVTGEPQPGNPKKRLFRLVPDRALINRMGFNNEGSAAVAARLAAREAVFRTVVGVNIGKTKVVPEEEAADDYVKSTERLARHADYLVVNVSSPNTPGLRNLQATEALRPLLSAVREAADRTVTERRVPLLVKIAPDLADDDIDAVADLAVELGLDGIIATNTTIAREGLGLKSEPTLVKETGGLSGAPLKARSLEVLSRLYARVGDRITLVGVGGIENAEDAWQRILAGATLVQGYSAFIYEGPFWGRAIHKGLAARLRTSPYATLADAVGADVRKSA</sequence>
<reference key="1">
    <citation type="journal article" date="2001" name="Proc. Natl. Acad. Sci. U.S.A.">
        <title>Genome sequence of an industrial microorganism Streptomyces avermitilis: deducing the ability of producing secondary metabolites.</title>
        <authorList>
            <person name="Omura S."/>
            <person name="Ikeda H."/>
            <person name="Ishikawa J."/>
            <person name="Hanamoto A."/>
            <person name="Takahashi C."/>
            <person name="Shinose M."/>
            <person name="Takahashi Y."/>
            <person name="Horikawa H."/>
            <person name="Nakazawa H."/>
            <person name="Osonoe T."/>
            <person name="Kikuchi H."/>
            <person name="Shiba T."/>
            <person name="Sakaki Y."/>
            <person name="Hattori M."/>
        </authorList>
    </citation>
    <scope>NUCLEOTIDE SEQUENCE [LARGE SCALE GENOMIC DNA]</scope>
    <source>
        <strain>ATCC 31267 / DSM 46492 / JCM 5070 / NBRC 14893 / NCIMB 12804 / NRRL 8165 / MA-4680</strain>
    </source>
</reference>
<reference key="2">
    <citation type="journal article" date="2003" name="Nat. Biotechnol.">
        <title>Complete genome sequence and comparative analysis of the industrial microorganism Streptomyces avermitilis.</title>
        <authorList>
            <person name="Ikeda H."/>
            <person name="Ishikawa J."/>
            <person name="Hanamoto A."/>
            <person name="Shinose M."/>
            <person name="Kikuchi H."/>
            <person name="Shiba T."/>
            <person name="Sakaki Y."/>
            <person name="Hattori M."/>
            <person name="Omura S."/>
        </authorList>
    </citation>
    <scope>NUCLEOTIDE SEQUENCE [LARGE SCALE GENOMIC DNA]</scope>
    <source>
        <strain>ATCC 31267 / DSM 46492 / JCM 5070 / NBRC 14893 / NCIMB 12804 / NRRL 8165 / MA-4680</strain>
    </source>
</reference>
<keyword id="KW-1003">Cell membrane</keyword>
<keyword id="KW-0285">Flavoprotein</keyword>
<keyword id="KW-0288">FMN</keyword>
<keyword id="KW-0472">Membrane</keyword>
<keyword id="KW-0560">Oxidoreductase</keyword>
<keyword id="KW-0665">Pyrimidine biosynthesis</keyword>
<keyword id="KW-1185">Reference proteome</keyword>
<evidence type="ECO:0000255" key="1">
    <source>
        <dbReference type="HAMAP-Rule" id="MF_00225"/>
    </source>
</evidence>
<organism>
    <name type="scientific">Streptomyces avermitilis (strain ATCC 31267 / DSM 46492 / JCM 5070 / NBRC 14893 / NCIMB 12804 / NRRL 8165 / MA-4680)</name>
    <dbReference type="NCBI Taxonomy" id="227882"/>
    <lineage>
        <taxon>Bacteria</taxon>
        <taxon>Bacillati</taxon>
        <taxon>Actinomycetota</taxon>
        <taxon>Actinomycetes</taxon>
        <taxon>Kitasatosporales</taxon>
        <taxon>Streptomycetaceae</taxon>
        <taxon>Streptomyces</taxon>
    </lineage>
</organism>
<accession>Q827Q6</accession>
<proteinExistence type="inferred from homology"/>